<accession>C1DQS0</accession>
<keyword id="KW-0997">Cell inner membrane</keyword>
<keyword id="KW-1003">Cell membrane</keyword>
<keyword id="KW-0342">GTP-binding</keyword>
<keyword id="KW-0378">Hydrolase</keyword>
<keyword id="KW-0472">Membrane</keyword>
<keyword id="KW-0547">Nucleotide-binding</keyword>
<keyword id="KW-0648">Protein biosynthesis</keyword>
<reference key="1">
    <citation type="journal article" date="2009" name="J. Bacteriol.">
        <title>Genome sequence of Azotobacter vinelandii, an obligate aerobe specialized to support diverse anaerobic metabolic processes.</title>
        <authorList>
            <person name="Setubal J.C."/>
            <person name="Dos Santos P."/>
            <person name="Goldman B.S."/>
            <person name="Ertesvaag H."/>
            <person name="Espin G."/>
            <person name="Rubio L.M."/>
            <person name="Valla S."/>
            <person name="Almeida N.F."/>
            <person name="Balasubramanian D."/>
            <person name="Cromes L."/>
            <person name="Curatti L."/>
            <person name="Du Z."/>
            <person name="Godsy E."/>
            <person name="Goodner B."/>
            <person name="Hellner-Burris K."/>
            <person name="Hernandez J.A."/>
            <person name="Houmiel K."/>
            <person name="Imperial J."/>
            <person name="Kennedy C."/>
            <person name="Larson T.J."/>
            <person name="Latreille P."/>
            <person name="Ligon L.S."/>
            <person name="Lu J."/>
            <person name="Maerk M."/>
            <person name="Miller N.M."/>
            <person name="Norton S."/>
            <person name="O'Carroll I.P."/>
            <person name="Paulsen I."/>
            <person name="Raulfs E.C."/>
            <person name="Roemer R."/>
            <person name="Rosser J."/>
            <person name="Segura D."/>
            <person name="Slater S."/>
            <person name="Stricklin S.L."/>
            <person name="Studholme D.J."/>
            <person name="Sun J."/>
            <person name="Viana C.J."/>
            <person name="Wallin E."/>
            <person name="Wang B."/>
            <person name="Wheeler C."/>
            <person name="Zhu H."/>
            <person name="Dean D.R."/>
            <person name="Dixon R."/>
            <person name="Wood D."/>
        </authorList>
    </citation>
    <scope>NUCLEOTIDE SEQUENCE [LARGE SCALE GENOMIC DNA]</scope>
    <source>
        <strain>DJ / ATCC BAA-1303</strain>
    </source>
</reference>
<protein>
    <recommendedName>
        <fullName evidence="1">Elongation factor 4</fullName>
        <shortName evidence="1">EF-4</shortName>
        <ecNumber evidence="1">3.6.5.n1</ecNumber>
    </recommendedName>
    <alternativeName>
        <fullName evidence="1">Ribosomal back-translocase LepA</fullName>
    </alternativeName>
</protein>
<proteinExistence type="inferred from homology"/>
<evidence type="ECO:0000255" key="1">
    <source>
        <dbReference type="HAMAP-Rule" id="MF_00071"/>
    </source>
</evidence>
<organism>
    <name type="scientific">Azotobacter vinelandii (strain DJ / ATCC BAA-1303)</name>
    <dbReference type="NCBI Taxonomy" id="322710"/>
    <lineage>
        <taxon>Bacteria</taxon>
        <taxon>Pseudomonadati</taxon>
        <taxon>Pseudomonadota</taxon>
        <taxon>Gammaproteobacteria</taxon>
        <taxon>Pseudomonadales</taxon>
        <taxon>Pseudomonadaceae</taxon>
        <taxon>Azotobacter</taxon>
    </lineage>
</organism>
<sequence length="599" mass="66212">MSDLSHIRNFSIIAHIDHGKSTLADRFIQICGGLSEREMEAQVLDSMDLERERGITIKAHSVTLHYKAQDGKTYQLNFIDTPGHVDFTYEVSRSLAACEGALLVVDAGQGVEAQSVANCYTAIEQGLEVMPVLNKMDLPQAEPERVKDEIEHIIGIDAGDAVLCSAKSGMGVPDVLEHLVRVIPPPQGEIEAPLQALIIDSWFDNYLGVVSLVRVKHGRVKKGDKILVKSTGKVHQVDSVGVFTPKHTEMPDLKAGEVGFIIAGIKDIHGAPVGDTLTLSSTPNVDMLPGFQRIKPQVYAGLFPVSSDDFEDFREALQKLTLNDAALQYEPESSDALGFGFRIGFLGMLHMEIIQERLEREYDLDLITTAPTVVYEVLLKNGDTICVDNPSKLPDLASIAEMREPIVRANILVPQEHLGNVINLCIEKRGVQRDMQFLSSQVQISYDLPMNEVVLDFFDRLKSVSRGYASLDYSFDRFQVANLVKLDVLINGDKVDALALIVHRDKAHQKGRALTEKMKELIPRQMFDVAIQAAIGGQVVARTTVKALRKNVLAKCYGGDVTRKRKLLEKQKAGKKRMKQVGSVEIPQEAFLAVLKVDS</sequence>
<feature type="chain" id="PRO_1000202444" description="Elongation factor 4">
    <location>
        <begin position="1"/>
        <end position="599"/>
    </location>
</feature>
<feature type="domain" description="tr-type G">
    <location>
        <begin position="5"/>
        <end position="187"/>
    </location>
</feature>
<feature type="binding site" evidence="1">
    <location>
        <begin position="17"/>
        <end position="22"/>
    </location>
    <ligand>
        <name>GTP</name>
        <dbReference type="ChEBI" id="CHEBI:37565"/>
    </ligand>
</feature>
<feature type="binding site" evidence="1">
    <location>
        <begin position="134"/>
        <end position="137"/>
    </location>
    <ligand>
        <name>GTP</name>
        <dbReference type="ChEBI" id="CHEBI:37565"/>
    </ligand>
</feature>
<comment type="function">
    <text evidence="1">Required for accurate and efficient protein synthesis under certain stress conditions. May act as a fidelity factor of the translation reaction, by catalyzing a one-codon backward translocation of tRNAs on improperly translocated ribosomes. Back-translocation proceeds from a post-translocation (POST) complex to a pre-translocation (PRE) complex, thus giving elongation factor G a second chance to translocate the tRNAs correctly. Binds to ribosomes in a GTP-dependent manner.</text>
</comment>
<comment type="catalytic activity">
    <reaction evidence="1">
        <text>GTP + H2O = GDP + phosphate + H(+)</text>
        <dbReference type="Rhea" id="RHEA:19669"/>
        <dbReference type="ChEBI" id="CHEBI:15377"/>
        <dbReference type="ChEBI" id="CHEBI:15378"/>
        <dbReference type="ChEBI" id="CHEBI:37565"/>
        <dbReference type="ChEBI" id="CHEBI:43474"/>
        <dbReference type="ChEBI" id="CHEBI:58189"/>
        <dbReference type="EC" id="3.6.5.n1"/>
    </reaction>
</comment>
<comment type="subcellular location">
    <subcellularLocation>
        <location evidence="1">Cell inner membrane</location>
        <topology evidence="1">Peripheral membrane protein</topology>
        <orientation evidence="1">Cytoplasmic side</orientation>
    </subcellularLocation>
</comment>
<comment type="similarity">
    <text evidence="1">Belongs to the TRAFAC class translation factor GTPase superfamily. Classic translation factor GTPase family. LepA subfamily.</text>
</comment>
<gene>
    <name evidence="1" type="primary">lepA</name>
    <name type="ordered locus">Avin_13740</name>
</gene>
<name>LEPA_AZOVD</name>
<dbReference type="EC" id="3.6.5.n1" evidence="1"/>
<dbReference type="EMBL" id="CP001157">
    <property type="protein sequence ID" value="ACO77593.1"/>
    <property type="molecule type" value="Genomic_DNA"/>
</dbReference>
<dbReference type="RefSeq" id="WP_012700012.1">
    <property type="nucleotide sequence ID" value="NC_012560.1"/>
</dbReference>
<dbReference type="SMR" id="C1DQS0"/>
<dbReference type="STRING" id="322710.Avin_13740"/>
<dbReference type="EnsemblBacteria" id="ACO77593">
    <property type="protein sequence ID" value="ACO77593"/>
    <property type="gene ID" value="Avin_13740"/>
</dbReference>
<dbReference type="GeneID" id="88184678"/>
<dbReference type="KEGG" id="avn:Avin_13740"/>
<dbReference type="eggNOG" id="COG0481">
    <property type="taxonomic scope" value="Bacteria"/>
</dbReference>
<dbReference type="HOGENOM" id="CLU_009995_3_3_6"/>
<dbReference type="OrthoDB" id="9801472at2"/>
<dbReference type="Proteomes" id="UP000002424">
    <property type="component" value="Chromosome"/>
</dbReference>
<dbReference type="GO" id="GO:0005886">
    <property type="term" value="C:plasma membrane"/>
    <property type="evidence" value="ECO:0007669"/>
    <property type="project" value="UniProtKB-SubCell"/>
</dbReference>
<dbReference type="GO" id="GO:0005525">
    <property type="term" value="F:GTP binding"/>
    <property type="evidence" value="ECO:0007669"/>
    <property type="project" value="UniProtKB-UniRule"/>
</dbReference>
<dbReference type="GO" id="GO:0003924">
    <property type="term" value="F:GTPase activity"/>
    <property type="evidence" value="ECO:0007669"/>
    <property type="project" value="UniProtKB-UniRule"/>
</dbReference>
<dbReference type="GO" id="GO:0097216">
    <property type="term" value="F:guanosine tetraphosphate binding"/>
    <property type="evidence" value="ECO:0007669"/>
    <property type="project" value="UniProtKB-ARBA"/>
</dbReference>
<dbReference type="GO" id="GO:0043022">
    <property type="term" value="F:ribosome binding"/>
    <property type="evidence" value="ECO:0007669"/>
    <property type="project" value="UniProtKB-UniRule"/>
</dbReference>
<dbReference type="GO" id="GO:0003746">
    <property type="term" value="F:translation elongation factor activity"/>
    <property type="evidence" value="ECO:0007669"/>
    <property type="project" value="UniProtKB-UniRule"/>
</dbReference>
<dbReference type="GO" id="GO:0045727">
    <property type="term" value="P:positive regulation of translation"/>
    <property type="evidence" value="ECO:0007669"/>
    <property type="project" value="UniProtKB-UniRule"/>
</dbReference>
<dbReference type="CDD" id="cd03699">
    <property type="entry name" value="EF4_II"/>
    <property type="match status" value="1"/>
</dbReference>
<dbReference type="CDD" id="cd16260">
    <property type="entry name" value="EF4_III"/>
    <property type="match status" value="1"/>
</dbReference>
<dbReference type="CDD" id="cd01890">
    <property type="entry name" value="LepA"/>
    <property type="match status" value="1"/>
</dbReference>
<dbReference type="CDD" id="cd03709">
    <property type="entry name" value="lepA_C"/>
    <property type="match status" value="1"/>
</dbReference>
<dbReference type="FunFam" id="3.40.50.300:FF:000078">
    <property type="entry name" value="Elongation factor 4"/>
    <property type="match status" value="1"/>
</dbReference>
<dbReference type="FunFam" id="2.40.30.10:FF:000015">
    <property type="entry name" value="Translation factor GUF1, mitochondrial"/>
    <property type="match status" value="1"/>
</dbReference>
<dbReference type="FunFam" id="3.30.70.240:FF:000007">
    <property type="entry name" value="Translation factor GUF1, mitochondrial"/>
    <property type="match status" value="1"/>
</dbReference>
<dbReference type="FunFam" id="3.30.70.2570:FF:000001">
    <property type="entry name" value="Translation factor GUF1, mitochondrial"/>
    <property type="match status" value="1"/>
</dbReference>
<dbReference type="FunFam" id="3.30.70.870:FF:000004">
    <property type="entry name" value="Translation factor GUF1, mitochondrial"/>
    <property type="match status" value="1"/>
</dbReference>
<dbReference type="Gene3D" id="3.30.70.240">
    <property type="match status" value="1"/>
</dbReference>
<dbReference type="Gene3D" id="3.30.70.2570">
    <property type="entry name" value="Elongation factor 4, C-terminal domain"/>
    <property type="match status" value="1"/>
</dbReference>
<dbReference type="Gene3D" id="3.30.70.870">
    <property type="entry name" value="Elongation Factor G (Translational Gtpase), domain 3"/>
    <property type="match status" value="1"/>
</dbReference>
<dbReference type="Gene3D" id="3.40.50.300">
    <property type="entry name" value="P-loop containing nucleotide triphosphate hydrolases"/>
    <property type="match status" value="1"/>
</dbReference>
<dbReference type="Gene3D" id="2.40.30.10">
    <property type="entry name" value="Translation factors"/>
    <property type="match status" value="1"/>
</dbReference>
<dbReference type="HAMAP" id="MF_00071">
    <property type="entry name" value="LepA"/>
    <property type="match status" value="1"/>
</dbReference>
<dbReference type="InterPro" id="IPR006297">
    <property type="entry name" value="EF-4"/>
</dbReference>
<dbReference type="InterPro" id="IPR035647">
    <property type="entry name" value="EFG_III/V"/>
</dbReference>
<dbReference type="InterPro" id="IPR000640">
    <property type="entry name" value="EFG_V-like"/>
</dbReference>
<dbReference type="InterPro" id="IPR004161">
    <property type="entry name" value="EFTu-like_2"/>
</dbReference>
<dbReference type="InterPro" id="IPR038363">
    <property type="entry name" value="LepA_C_sf"/>
</dbReference>
<dbReference type="InterPro" id="IPR013842">
    <property type="entry name" value="LepA_CTD"/>
</dbReference>
<dbReference type="InterPro" id="IPR035654">
    <property type="entry name" value="LepA_IV"/>
</dbReference>
<dbReference type="InterPro" id="IPR027417">
    <property type="entry name" value="P-loop_NTPase"/>
</dbReference>
<dbReference type="InterPro" id="IPR005225">
    <property type="entry name" value="Small_GTP-bd"/>
</dbReference>
<dbReference type="InterPro" id="IPR000795">
    <property type="entry name" value="T_Tr_GTP-bd_dom"/>
</dbReference>
<dbReference type="NCBIfam" id="TIGR01393">
    <property type="entry name" value="lepA"/>
    <property type="match status" value="1"/>
</dbReference>
<dbReference type="NCBIfam" id="TIGR00231">
    <property type="entry name" value="small_GTP"/>
    <property type="match status" value="1"/>
</dbReference>
<dbReference type="PANTHER" id="PTHR43512:SF4">
    <property type="entry name" value="TRANSLATION FACTOR GUF1 HOMOLOG, CHLOROPLASTIC"/>
    <property type="match status" value="1"/>
</dbReference>
<dbReference type="PANTHER" id="PTHR43512">
    <property type="entry name" value="TRANSLATION FACTOR GUF1-RELATED"/>
    <property type="match status" value="1"/>
</dbReference>
<dbReference type="Pfam" id="PF00679">
    <property type="entry name" value="EFG_C"/>
    <property type="match status" value="1"/>
</dbReference>
<dbReference type="Pfam" id="PF00009">
    <property type="entry name" value="GTP_EFTU"/>
    <property type="match status" value="1"/>
</dbReference>
<dbReference type="Pfam" id="PF03144">
    <property type="entry name" value="GTP_EFTU_D2"/>
    <property type="match status" value="1"/>
</dbReference>
<dbReference type="Pfam" id="PF06421">
    <property type="entry name" value="LepA_C"/>
    <property type="match status" value="1"/>
</dbReference>
<dbReference type="PRINTS" id="PR00315">
    <property type="entry name" value="ELONGATNFCT"/>
</dbReference>
<dbReference type="SUPFAM" id="SSF54980">
    <property type="entry name" value="EF-G C-terminal domain-like"/>
    <property type="match status" value="2"/>
</dbReference>
<dbReference type="SUPFAM" id="SSF52540">
    <property type="entry name" value="P-loop containing nucleoside triphosphate hydrolases"/>
    <property type="match status" value="1"/>
</dbReference>
<dbReference type="PROSITE" id="PS51722">
    <property type="entry name" value="G_TR_2"/>
    <property type="match status" value="1"/>
</dbReference>